<protein>
    <recommendedName>
        <fullName evidence="1">Kelch-like protein diablo</fullName>
    </recommendedName>
</protein>
<name>KLHDB_DROGR</name>
<reference evidence="6" key="1">
    <citation type="journal article" date="2007" name="Nature">
        <title>Evolution of genes and genomes on the Drosophila phylogeny.</title>
        <authorList>
            <consortium name="Drosophila 12 genomes consortium"/>
        </authorList>
    </citation>
    <scope>NUCLEOTIDE SEQUENCE [LARGE SCALE GENOMIC DNA]</scope>
    <source>
        <strain evidence="6">Tucson 15287-2541.00</strain>
    </source>
</reference>
<sequence>MGDPLLPGSTGLGSGSATAATGGSVTAGSGLGNGGTGGAERPPSPARLTHTSEKHPKVTLTELNMLRRHRELCDVVLNVGGRKIFAHRVILSACSSYFCAMFTGELEESRQTEVTIRDIDENAMELLIDFCYTAHIIVEESNVQTLLPAACLLQLVEIQDICCEFLKRQLDPTNCLGIRAFADTHSCRELLRIADKFTQHNFQEVMESEEFLLLPVGQLVDIICSDELNVRSEEQVFNAVMSWLKYNVADRRQHLAQVLQHVRLPLLSPKFLVGTVGSDLLVRSDEACRDLVDEAKNYLLLPQERPLMQGPRTRPRKPTRRGEVLFAVGGWCSGDAIASVERFDPQTNDWKMVAPMSKRRCGVGVAVLNDLLYAVGGHDGQSYLNSIERYDPQTNQWSCDVAPTTSCRTSVGVAVLDGFLYAVGGQDGVQCLNHVERYDPKENKWSKVAPMTTRRLGVAVAVLSGHLYAIGGSDGQCPLNTVERYDPRQNKWVAVNPMSTRRKHLGCAVFNNYIYAVGGRDDCMELSSAERYNPLTNTWSPIVAMTSRRSGVGLAVVNGQLYAVGGFDGSAYLKTIEVYDPETNQWRLCGCMNYRRLGGGVGVMRAPQTENYMWCDNSFRQHNL</sequence>
<organism>
    <name type="scientific">Drosophila grimshawi</name>
    <name type="common">Hawaiian fruit fly</name>
    <name type="synonym">Idiomyia grimshawi</name>
    <dbReference type="NCBI Taxonomy" id="7222"/>
    <lineage>
        <taxon>Eukaryota</taxon>
        <taxon>Metazoa</taxon>
        <taxon>Ecdysozoa</taxon>
        <taxon>Arthropoda</taxon>
        <taxon>Hexapoda</taxon>
        <taxon>Insecta</taxon>
        <taxon>Pterygota</taxon>
        <taxon>Neoptera</taxon>
        <taxon>Endopterygota</taxon>
        <taxon>Diptera</taxon>
        <taxon>Brachycera</taxon>
        <taxon>Muscomorpha</taxon>
        <taxon>Ephydroidea</taxon>
        <taxon>Drosophilidae</taxon>
        <taxon>Drosophila</taxon>
        <taxon>Hawaiian Drosophila</taxon>
    </lineage>
</organism>
<dbReference type="EMBL" id="CH916366">
    <property type="protein sequence ID" value="EDV97838.1"/>
    <property type="molecule type" value="Genomic_DNA"/>
</dbReference>
<dbReference type="RefSeq" id="XP_001985490.1">
    <property type="nucleotide sequence ID" value="XM_001985454.1"/>
</dbReference>
<dbReference type="SMR" id="B4J045"/>
<dbReference type="FunCoup" id="B4J045">
    <property type="interactions" value="1834"/>
</dbReference>
<dbReference type="STRING" id="7222.B4J045"/>
<dbReference type="EnsemblMetazoa" id="FBtr0152504">
    <property type="protein sequence ID" value="FBpp0150996"/>
    <property type="gene ID" value="FBgn0124560"/>
</dbReference>
<dbReference type="EnsemblMetazoa" id="XM_032741410.2">
    <property type="protein sequence ID" value="XP_032597301.1"/>
    <property type="gene ID" value="LOC6556773"/>
</dbReference>
<dbReference type="GeneID" id="6556773"/>
<dbReference type="KEGG" id="dgr:6556773"/>
<dbReference type="CTD" id="53556"/>
<dbReference type="eggNOG" id="KOG4441">
    <property type="taxonomic scope" value="Eukaryota"/>
</dbReference>
<dbReference type="HOGENOM" id="CLU_004253_14_2_1"/>
<dbReference type="InParanoid" id="B4J045"/>
<dbReference type="OMA" id="CAVFNNL"/>
<dbReference type="OrthoDB" id="45365at2759"/>
<dbReference type="PhylomeDB" id="B4J045"/>
<dbReference type="UniPathway" id="UPA00143"/>
<dbReference type="Proteomes" id="UP000001070">
    <property type="component" value="Unassembled WGS sequence"/>
</dbReference>
<dbReference type="GO" id="GO:0031463">
    <property type="term" value="C:Cul3-RING ubiquitin ligase complex"/>
    <property type="evidence" value="ECO:0007669"/>
    <property type="project" value="EnsemblMetazoa"/>
</dbReference>
<dbReference type="GO" id="GO:0003779">
    <property type="term" value="F:actin binding"/>
    <property type="evidence" value="ECO:0007669"/>
    <property type="project" value="UniProtKB-KW"/>
</dbReference>
<dbReference type="GO" id="GO:1990756">
    <property type="term" value="F:ubiquitin-like ligase-substrate adaptor activity"/>
    <property type="evidence" value="ECO:0007669"/>
    <property type="project" value="EnsemblMetazoa"/>
</dbReference>
<dbReference type="GO" id="GO:0045886">
    <property type="term" value="P:negative regulation of synaptic assembly at neuromuscular junction"/>
    <property type="evidence" value="ECO:0000250"/>
    <property type="project" value="UniProtKB"/>
</dbReference>
<dbReference type="GO" id="GO:0043161">
    <property type="term" value="P:proteasome-mediated ubiquitin-dependent protein catabolic process"/>
    <property type="evidence" value="ECO:0007669"/>
    <property type="project" value="EnsemblMetazoa"/>
</dbReference>
<dbReference type="GO" id="GO:0016567">
    <property type="term" value="P:protein ubiquitination"/>
    <property type="evidence" value="ECO:0007669"/>
    <property type="project" value="UniProtKB-UniPathway"/>
</dbReference>
<dbReference type="CDD" id="cd18459">
    <property type="entry name" value="BACK_KLHL20"/>
    <property type="match status" value="1"/>
</dbReference>
<dbReference type="CDD" id="cd18249">
    <property type="entry name" value="BTB_POZ_KLHL20_KLEIP"/>
    <property type="match status" value="1"/>
</dbReference>
<dbReference type="FunFam" id="1.25.40.420:FF:000001">
    <property type="entry name" value="Kelch-like family member 12"/>
    <property type="match status" value="1"/>
</dbReference>
<dbReference type="FunFam" id="2.120.10.80:FF:000006">
    <property type="entry name" value="Kelch-like family member 20"/>
    <property type="match status" value="1"/>
</dbReference>
<dbReference type="FunFam" id="3.30.710.10:FF:000001">
    <property type="entry name" value="Kelch-like family member 20"/>
    <property type="match status" value="1"/>
</dbReference>
<dbReference type="Gene3D" id="1.25.40.420">
    <property type="match status" value="1"/>
</dbReference>
<dbReference type="Gene3D" id="2.120.10.80">
    <property type="entry name" value="Kelch-type beta propeller"/>
    <property type="match status" value="1"/>
</dbReference>
<dbReference type="Gene3D" id="3.30.710.10">
    <property type="entry name" value="Potassium Channel Kv1.1, Chain A"/>
    <property type="match status" value="1"/>
</dbReference>
<dbReference type="InterPro" id="IPR011705">
    <property type="entry name" value="BACK"/>
</dbReference>
<dbReference type="InterPro" id="IPR017096">
    <property type="entry name" value="BTB-kelch_protein"/>
</dbReference>
<dbReference type="InterPro" id="IPR000210">
    <property type="entry name" value="BTB/POZ_dom"/>
</dbReference>
<dbReference type="InterPro" id="IPR011043">
    <property type="entry name" value="Gal_Oxase/kelch_b-propeller"/>
</dbReference>
<dbReference type="InterPro" id="IPR015915">
    <property type="entry name" value="Kelch-typ_b-propeller"/>
</dbReference>
<dbReference type="InterPro" id="IPR006652">
    <property type="entry name" value="Kelch_1"/>
</dbReference>
<dbReference type="InterPro" id="IPR011333">
    <property type="entry name" value="SKP1/BTB/POZ_sf"/>
</dbReference>
<dbReference type="PANTHER" id="PTHR24412">
    <property type="entry name" value="KELCH PROTEIN"/>
    <property type="match status" value="1"/>
</dbReference>
<dbReference type="PANTHER" id="PTHR24412:SF451">
    <property type="entry name" value="KELCH-LIKE PROTEIN 20"/>
    <property type="match status" value="1"/>
</dbReference>
<dbReference type="Pfam" id="PF07707">
    <property type="entry name" value="BACK"/>
    <property type="match status" value="1"/>
</dbReference>
<dbReference type="Pfam" id="PF00651">
    <property type="entry name" value="BTB"/>
    <property type="match status" value="1"/>
</dbReference>
<dbReference type="Pfam" id="PF01344">
    <property type="entry name" value="Kelch_1"/>
    <property type="match status" value="6"/>
</dbReference>
<dbReference type="PIRSF" id="PIRSF037037">
    <property type="entry name" value="Kelch-like_protein_gigaxonin"/>
    <property type="match status" value="1"/>
</dbReference>
<dbReference type="SMART" id="SM00875">
    <property type="entry name" value="BACK"/>
    <property type="match status" value="1"/>
</dbReference>
<dbReference type="SMART" id="SM00225">
    <property type="entry name" value="BTB"/>
    <property type="match status" value="1"/>
</dbReference>
<dbReference type="SMART" id="SM00612">
    <property type="entry name" value="Kelch"/>
    <property type="match status" value="6"/>
</dbReference>
<dbReference type="SUPFAM" id="SSF50965">
    <property type="entry name" value="Galactose oxidase, central domain"/>
    <property type="match status" value="1"/>
</dbReference>
<dbReference type="SUPFAM" id="SSF117281">
    <property type="entry name" value="Kelch motif"/>
    <property type="match status" value="1"/>
</dbReference>
<dbReference type="SUPFAM" id="SSF54695">
    <property type="entry name" value="POZ domain"/>
    <property type="match status" value="1"/>
</dbReference>
<dbReference type="PROSITE" id="PS50097">
    <property type="entry name" value="BTB"/>
    <property type="match status" value="1"/>
</dbReference>
<accession>B4J045</accession>
<feature type="chain" id="PRO_0000379947" description="Kelch-like protein diablo">
    <location>
        <begin position="1"/>
        <end position="624"/>
    </location>
</feature>
<feature type="domain" description="BTB" evidence="4">
    <location>
        <begin position="73"/>
        <end position="140"/>
    </location>
</feature>
<feature type="domain" description="BACK" evidence="3">
    <location>
        <begin position="175"/>
        <end position="277"/>
    </location>
</feature>
<feature type="repeat" description="Kelch 1" evidence="3">
    <location>
        <begin position="324"/>
        <end position="370"/>
    </location>
</feature>
<feature type="repeat" description="Kelch 2" evidence="3">
    <location>
        <begin position="372"/>
        <end position="418"/>
    </location>
</feature>
<feature type="repeat" description="Kelch 3" evidence="3">
    <location>
        <begin position="419"/>
        <end position="465"/>
    </location>
</feature>
<feature type="repeat" description="Kelch 4" evidence="3">
    <location>
        <begin position="467"/>
        <end position="512"/>
    </location>
</feature>
<feature type="repeat" description="Kelch 5" evidence="3">
    <location>
        <begin position="514"/>
        <end position="559"/>
    </location>
</feature>
<feature type="repeat" description="Kelch 6" evidence="3">
    <location>
        <begin position="560"/>
        <end position="606"/>
    </location>
</feature>
<feature type="region of interest" description="Disordered" evidence="5">
    <location>
        <begin position="1"/>
        <end position="55"/>
    </location>
</feature>
<feature type="compositionally biased region" description="Low complexity" evidence="5">
    <location>
        <begin position="15"/>
        <end position="28"/>
    </location>
</feature>
<feature type="compositionally biased region" description="Gly residues" evidence="5">
    <location>
        <begin position="29"/>
        <end position="38"/>
    </location>
</feature>
<keyword id="KW-0009">Actin-binding</keyword>
<keyword id="KW-0880">Kelch repeat</keyword>
<keyword id="KW-1185">Reference proteome</keyword>
<keyword id="KW-0677">Repeat</keyword>
<keyword id="KW-0833">Ubl conjugation pathway</keyword>
<gene>
    <name evidence="1" type="primary">dbo</name>
    <name type="ORF">GH17090</name>
</gene>
<proteinExistence type="inferred from homology"/>
<comment type="function">
    <text evidence="1 2">Probable substrate-specific adapter of an E3 ubiquitin-protein ligase complex which mediates the ubiquitination and subsequent proteasomal degradation of target proteins. May have a role in synapse differentiation and growth (By similarity).</text>
</comment>
<comment type="pathway">
    <text evidence="2">Protein modification; protein ubiquitination.</text>
</comment>
<evidence type="ECO:0000250" key="1">
    <source>
        <dbReference type="UniProtKB" id="Q9VUU5"/>
    </source>
</evidence>
<evidence type="ECO:0000250" key="2">
    <source>
        <dbReference type="UniProtKB" id="Q9Y2M5"/>
    </source>
</evidence>
<evidence type="ECO:0000255" key="3"/>
<evidence type="ECO:0000255" key="4">
    <source>
        <dbReference type="PROSITE-ProRule" id="PRU00037"/>
    </source>
</evidence>
<evidence type="ECO:0000256" key="5">
    <source>
        <dbReference type="SAM" id="MobiDB-lite"/>
    </source>
</evidence>
<evidence type="ECO:0000312" key="6">
    <source>
        <dbReference type="EMBL" id="EDV97838.1"/>
    </source>
</evidence>